<dbReference type="EC" id="2.7.7.8" evidence="1"/>
<dbReference type="EMBL" id="CP000232">
    <property type="protein sequence ID" value="ABC19370.1"/>
    <property type="molecule type" value="Genomic_DNA"/>
</dbReference>
<dbReference type="RefSeq" id="YP_429913.1">
    <property type="nucleotide sequence ID" value="NC_007644.1"/>
</dbReference>
<dbReference type="SMR" id="Q2RJL9"/>
<dbReference type="STRING" id="264732.Moth_1056"/>
<dbReference type="EnsemblBacteria" id="ABC19370">
    <property type="protein sequence ID" value="ABC19370"/>
    <property type="gene ID" value="Moth_1056"/>
</dbReference>
<dbReference type="KEGG" id="mta:Moth_1056"/>
<dbReference type="PATRIC" id="fig|264732.11.peg.1137"/>
<dbReference type="eggNOG" id="COG1185">
    <property type="taxonomic scope" value="Bacteria"/>
</dbReference>
<dbReference type="HOGENOM" id="CLU_004217_2_2_9"/>
<dbReference type="OrthoDB" id="9804305at2"/>
<dbReference type="GO" id="GO:0005829">
    <property type="term" value="C:cytosol"/>
    <property type="evidence" value="ECO:0007669"/>
    <property type="project" value="TreeGrafter"/>
</dbReference>
<dbReference type="GO" id="GO:0000175">
    <property type="term" value="F:3'-5'-RNA exonuclease activity"/>
    <property type="evidence" value="ECO:0007669"/>
    <property type="project" value="TreeGrafter"/>
</dbReference>
<dbReference type="GO" id="GO:0000287">
    <property type="term" value="F:magnesium ion binding"/>
    <property type="evidence" value="ECO:0007669"/>
    <property type="project" value="UniProtKB-UniRule"/>
</dbReference>
<dbReference type="GO" id="GO:0004654">
    <property type="term" value="F:polyribonucleotide nucleotidyltransferase activity"/>
    <property type="evidence" value="ECO:0007669"/>
    <property type="project" value="UniProtKB-UniRule"/>
</dbReference>
<dbReference type="GO" id="GO:0003723">
    <property type="term" value="F:RNA binding"/>
    <property type="evidence" value="ECO:0007669"/>
    <property type="project" value="UniProtKB-UniRule"/>
</dbReference>
<dbReference type="GO" id="GO:0006402">
    <property type="term" value="P:mRNA catabolic process"/>
    <property type="evidence" value="ECO:0007669"/>
    <property type="project" value="UniProtKB-UniRule"/>
</dbReference>
<dbReference type="GO" id="GO:0006396">
    <property type="term" value="P:RNA processing"/>
    <property type="evidence" value="ECO:0007669"/>
    <property type="project" value="InterPro"/>
</dbReference>
<dbReference type="CDD" id="cd02393">
    <property type="entry name" value="KH-I_PNPase"/>
    <property type="match status" value="1"/>
</dbReference>
<dbReference type="CDD" id="cd11363">
    <property type="entry name" value="RNase_PH_PNPase_1"/>
    <property type="match status" value="1"/>
</dbReference>
<dbReference type="CDD" id="cd11364">
    <property type="entry name" value="RNase_PH_PNPase_2"/>
    <property type="match status" value="1"/>
</dbReference>
<dbReference type="CDD" id="cd04472">
    <property type="entry name" value="S1_PNPase"/>
    <property type="match status" value="1"/>
</dbReference>
<dbReference type="FunFam" id="3.30.1370.10:FF:000001">
    <property type="entry name" value="Polyribonucleotide nucleotidyltransferase"/>
    <property type="match status" value="1"/>
</dbReference>
<dbReference type="FunFam" id="3.30.230.70:FF:000001">
    <property type="entry name" value="Polyribonucleotide nucleotidyltransferase"/>
    <property type="match status" value="1"/>
</dbReference>
<dbReference type="FunFam" id="3.30.230.70:FF:000002">
    <property type="entry name" value="Polyribonucleotide nucleotidyltransferase"/>
    <property type="match status" value="1"/>
</dbReference>
<dbReference type="FunFam" id="2.40.50.140:FF:000189">
    <property type="entry name" value="Polyribonucleotide nucleotidyltransferase, putative"/>
    <property type="match status" value="1"/>
</dbReference>
<dbReference type="Gene3D" id="3.30.230.70">
    <property type="entry name" value="GHMP Kinase, N-terminal domain"/>
    <property type="match status" value="2"/>
</dbReference>
<dbReference type="Gene3D" id="3.30.1370.10">
    <property type="entry name" value="K Homology domain, type 1"/>
    <property type="match status" value="1"/>
</dbReference>
<dbReference type="Gene3D" id="2.40.50.140">
    <property type="entry name" value="Nucleic acid-binding proteins"/>
    <property type="match status" value="1"/>
</dbReference>
<dbReference type="HAMAP" id="MF_01595">
    <property type="entry name" value="PNPase"/>
    <property type="match status" value="1"/>
</dbReference>
<dbReference type="InterPro" id="IPR001247">
    <property type="entry name" value="ExoRNase_PH_dom1"/>
</dbReference>
<dbReference type="InterPro" id="IPR015847">
    <property type="entry name" value="ExoRNase_PH_dom2"/>
</dbReference>
<dbReference type="InterPro" id="IPR036345">
    <property type="entry name" value="ExoRNase_PH_dom2_sf"/>
</dbReference>
<dbReference type="InterPro" id="IPR004087">
    <property type="entry name" value="KH_dom"/>
</dbReference>
<dbReference type="InterPro" id="IPR004088">
    <property type="entry name" value="KH_dom_type_1"/>
</dbReference>
<dbReference type="InterPro" id="IPR036612">
    <property type="entry name" value="KH_dom_type_1_sf"/>
</dbReference>
<dbReference type="InterPro" id="IPR012340">
    <property type="entry name" value="NA-bd_OB-fold"/>
</dbReference>
<dbReference type="InterPro" id="IPR012162">
    <property type="entry name" value="PNPase"/>
</dbReference>
<dbReference type="InterPro" id="IPR027408">
    <property type="entry name" value="PNPase/RNase_PH_dom_sf"/>
</dbReference>
<dbReference type="InterPro" id="IPR015848">
    <property type="entry name" value="PNPase_PH_RNA-bd_bac/org-type"/>
</dbReference>
<dbReference type="InterPro" id="IPR036456">
    <property type="entry name" value="PNPase_PH_RNA-bd_sf"/>
</dbReference>
<dbReference type="InterPro" id="IPR020568">
    <property type="entry name" value="Ribosomal_Su5_D2-typ_SF"/>
</dbReference>
<dbReference type="InterPro" id="IPR003029">
    <property type="entry name" value="S1_domain"/>
</dbReference>
<dbReference type="NCBIfam" id="TIGR03591">
    <property type="entry name" value="polynuc_phos"/>
    <property type="match status" value="1"/>
</dbReference>
<dbReference type="NCBIfam" id="NF008805">
    <property type="entry name" value="PRK11824.1"/>
    <property type="match status" value="1"/>
</dbReference>
<dbReference type="PANTHER" id="PTHR11252">
    <property type="entry name" value="POLYRIBONUCLEOTIDE NUCLEOTIDYLTRANSFERASE"/>
    <property type="match status" value="1"/>
</dbReference>
<dbReference type="PANTHER" id="PTHR11252:SF0">
    <property type="entry name" value="POLYRIBONUCLEOTIDE NUCLEOTIDYLTRANSFERASE 1, MITOCHONDRIAL"/>
    <property type="match status" value="1"/>
</dbReference>
<dbReference type="Pfam" id="PF00013">
    <property type="entry name" value="KH_1"/>
    <property type="match status" value="1"/>
</dbReference>
<dbReference type="Pfam" id="PF03726">
    <property type="entry name" value="PNPase"/>
    <property type="match status" value="1"/>
</dbReference>
<dbReference type="Pfam" id="PF01138">
    <property type="entry name" value="RNase_PH"/>
    <property type="match status" value="2"/>
</dbReference>
<dbReference type="Pfam" id="PF03725">
    <property type="entry name" value="RNase_PH_C"/>
    <property type="match status" value="2"/>
</dbReference>
<dbReference type="Pfam" id="PF00575">
    <property type="entry name" value="S1"/>
    <property type="match status" value="1"/>
</dbReference>
<dbReference type="PIRSF" id="PIRSF005499">
    <property type="entry name" value="PNPase"/>
    <property type="match status" value="1"/>
</dbReference>
<dbReference type="SMART" id="SM00322">
    <property type="entry name" value="KH"/>
    <property type="match status" value="1"/>
</dbReference>
<dbReference type="SMART" id="SM00316">
    <property type="entry name" value="S1"/>
    <property type="match status" value="1"/>
</dbReference>
<dbReference type="SUPFAM" id="SSF54791">
    <property type="entry name" value="Eukaryotic type KH-domain (KH-domain type I)"/>
    <property type="match status" value="1"/>
</dbReference>
<dbReference type="SUPFAM" id="SSF50249">
    <property type="entry name" value="Nucleic acid-binding proteins"/>
    <property type="match status" value="1"/>
</dbReference>
<dbReference type="SUPFAM" id="SSF46915">
    <property type="entry name" value="Polynucleotide phosphorylase/guanosine pentaphosphate synthase (PNPase/GPSI), domain 3"/>
    <property type="match status" value="1"/>
</dbReference>
<dbReference type="SUPFAM" id="SSF55666">
    <property type="entry name" value="Ribonuclease PH domain 2-like"/>
    <property type="match status" value="2"/>
</dbReference>
<dbReference type="SUPFAM" id="SSF54211">
    <property type="entry name" value="Ribosomal protein S5 domain 2-like"/>
    <property type="match status" value="2"/>
</dbReference>
<dbReference type="PROSITE" id="PS50084">
    <property type="entry name" value="KH_TYPE_1"/>
    <property type="match status" value="1"/>
</dbReference>
<dbReference type="PROSITE" id="PS50126">
    <property type="entry name" value="S1"/>
    <property type="match status" value="1"/>
</dbReference>
<comment type="function">
    <text evidence="1">Involved in mRNA degradation. Catalyzes the phosphorolysis of single-stranded polyribonucleotides processively in the 3'- to 5'-direction.</text>
</comment>
<comment type="catalytic activity">
    <reaction evidence="1">
        <text>RNA(n+1) + phosphate = RNA(n) + a ribonucleoside 5'-diphosphate</text>
        <dbReference type="Rhea" id="RHEA:22096"/>
        <dbReference type="Rhea" id="RHEA-COMP:14527"/>
        <dbReference type="Rhea" id="RHEA-COMP:17342"/>
        <dbReference type="ChEBI" id="CHEBI:43474"/>
        <dbReference type="ChEBI" id="CHEBI:57930"/>
        <dbReference type="ChEBI" id="CHEBI:140395"/>
        <dbReference type="EC" id="2.7.7.8"/>
    </reaction>
</comment>
<comment type="cofactor">
    <cofactor evidence="1">
        <name>Mg(2+)</name>
        <dbReference type="ChEBI" id="CHEBI:18420"/>
    </cofactor>
</comment>
<comment type="subcellular location">
    <subcellularLocation>
        <location evidence="1">Cytoplasm</location>
    </subcellularLocation>
</comment>
<comment type="similarity">
    <text evidence="1">Belongs to the polyribonucleotide nucleotidyltransferase family.</text>
</comment>
<evidence type="ECO:0000255" key="1">
    <source>
        <dbReference type="HAMAP-Rule" id="MF_01595"/>
    </source>
</evidence>
<evidence type="ECO:0000256" key="2">
    <source>
        <dbReference type="SAM" id="MobiDB-lite"/>
    </source>
</evidence>
<organism>
    <name type="scientific">Moorella thermoacetica (strain ATCC 39073 / JCM 9320)</name>
    <dbReference type="NCBI Taxonomy" id="264732"/>
    <lineage>
        <taxon>Bacteria</taxon>
        <taxon>Bacillati</taxon>
        <taxon>Bacillota</taxon>
        <taxon>Clostridia</taxon>
        <taxon>Moorellales</taxon>
        <taxon>Moorellaceae</taxon>
        <taxon>Moorella</taxon>
    </lineage>
</organism>
<reference key="1">
    <citation type="journal article" date="2008" name="Environ. Microbiol.">
        <title>The complete genome sequence of Moorella thermoacetica (f. Clostridium thermoaceticum).</title>
        <authorList>
            <person name="Pierce E."/>
            <person name="Xie G."/>
            <person name="Barabote R.D."/>
            <person name="Saunders E."/>
            <person name="Han C.S."/>
            <person name="Detter J.C."/>
            <person name="Richardson P."/>
            <person name="Brettin T.S."/>
            <person name="Das A."/>
            <person name="Ljungdahl L.G."/>
            <person name="Ragsdale S.W."/>
        </authorList>
    </citation>
    <scope>NUCLEOTIDE SEQUENCE [LARGE SCALE GENOMIC DNA]</scope>
    <source>
        <strain>ATCC 39073 / JCM 9320</strain>
    </source>
</reference>
<name>PNP_MOOTA</name>
<keyword id="KW-0963">Cytoplasm</keyword>
<keyword id="KW-0460">Magnesium</keyword>
<keyword id="KW-0479">Metal-binding</keyword>
<keyword id="KW-0548">Nucleotidyltransferase</keyword>
<keyword id="KW-0694">RNA-binding</keyword>
<keyword id="KW-0808">Transferase</keyword>
<proteinExistence type="inferred from homology"/>
<gene>
    <name evidence="1" type="primary">pnp</name>
    <name type="ordered locus">Moth_1056</name>
</gene>
<sequence>MQGVLRKTLVVAGRDLTLETGRLAKQAGGAVMVSYGGTMVLVTATASEEPREGIDFFPLTVDYEERLYAAGKIPGGFIKREGRPSEKAILSARLIDRPIRPLFPKFYRNDVHVVATVMSVDQDCPPNVAGIIGASAALMLSAIPFAGPIGAVSVGLIDNRPVINPTLEEDSRSSLNLTVAGTANAIMMVEAGAKEVPEDLMLECIMQGHEEIKRIVAFINEFRAEALAMGLAKEKPELVAPQLDPAWESRVREIATPRLREVIYRSRDEKWSKQERDKQLDACREEINNLILEGQEEALAANPELPGLIKELITKIEKEIVRRMILTEGIRVDGRTLEEIRPITCEVGVLSRTHGSGLFTRGETQVLTVTTLGPISDEQILDDLGVDESKRYMHHYNFPPYSVGEARPIRAPGRREIGHGALAERALEPMIPSEEEFPYAIRLVSEVLGSNGSTSMGSVCGSTLSLMDAGVPIKAPVAGVAMGLVKENDQVAILTDIQGLEDALGDMDFKVAGTKKGITALQMDIKIAGIDRSILERALEQARRGRLFILDKILATIPEPRKELSPYAPRMLTITIDPDKIRDIIGPGGKIIKKIIEETGVEIDVEDDGRVFIASTDAAAGERALKIIESLTQDVETGKVYNGKVTRVTDFGAFVEVIPRVLGMPGKEGLVHISQLANERVEKVEDVVQEGDYILVKAIGFDPQGRLKLSRKEALNESTVGEGGHRHFRRAGREGGHRGLNNRRQSR</sequence>
<protein>
    <recommendedName>
        <fullName evidence="1">Polyribonucleotide nucleotidyltransferase</fullName>
        <ecNumber evidence="1">2.7.7.8</ecNumber>
    </recommendedName>
    <alternativeName>
        <fullName evidence="1">Polynucleotide phosphorylase</fullName>
        <shortName evidence="1">PNPase</shortName>
    </alternativeName>
</protein>
<feature type="chain" id="PRO_0000329714" description="Polyribonucleotide nucleotidyltransferase">
    <location>
        <begin position="1"/>
        <end position="747"/>
    </location>
</feature>
<feature type="domain" description="KH" evidence="1">
    <location>
        <begin position="569"/>
        <end position="628"/>
    </location>
</feature>
<feature type="domain" description="S1 motif" evidence="1">
    <location>
        <begin position="638"/>
        <end position="712"/>
    </location>
</feature>
<feature type="region of interest" description="Disordered" evidence="2">
    <location>
        <begin position="718"/>
        <end position="747"/>
    </location>
</feature>
<feature type="binding site" evidence="1">
    <location>
        <position position="502"/>
    </location>
    <ligand>
        <name>Mg(2+)</name>
        <dbReference type="ChEBI" id="CHEBI:18420"/>
    </ligand>
</feature>
<feature type="binding site" evidence="1">
    <location>
        <position position="508"/>
    </location>
    <ligand>
        <name>Mg(2+)</name>
        <dbReference type="ChEBI" id="CHEBI:18420"/>
    </ligand>
</feature>
<accession>Q2RJL9</accession>